<name>PUR5_CHRVO</name>
<protein>
    <recommendedName>
        <fullName evidence="1">Phosphoribosylformylglycinamidine cyclo-ligase</fullName>
        <ecNumber evidence="1">6.3.3.1</ecNumber>
    </recommendedName>
    <alternativeName>
        <fullName evidence="1">AIR synthase</fullName>
    </alternativeName>
    <alternativeName>
        <fullName evidence="1">AIRS</fullName>
    </alternativeName>
    <alternativeName>
        <fullName evidence="1">Phosphoribosyl-aminoimidazole synthetase</fullName>
    </alternativeName>
</protein>
<accession>Q7NS12</accession>
<proteinExistence type="inferred from homology"/>
<organism>
    <name type="scientific">Chromobacterium violaceum (strain ATCC 12472 / DSM 30191 / JCM 1249 / CCUG 213 / NBRC 12614 / NCIMB 9131 / NCTC 9757 / MK)</name>
    <dbReference type="NCBI Taxonomy" id="243365"/>
    <lineage>
        <taxon>Bacteria</taxon>
        <taxon>Pseudomonadati</taxon>
        <taxon>Pseudomonadota</taxon>
        <taxon>Betaproteobacteria</taxon>
        <taxon>Neisseriales</taxon>
        <taxon>Chromobacteriaceae</taxon>
        <taxon>Chromobacterium</taxon>
    </lineage>
</organism>
<sequence length="345" mass="36997">MNTTSLSYRDAGVDIDAGDALVENIKPFAKRTMRPEVLGGIGGFGALVEISKKYKEPVLVSGTDGVGTKLKLAFDWNRHDTVGIDLVAMSVNDILVQGAEPLFFLDYFACGKLDVAQATEVIKGIAAGCEQAGCALTGGETAEMPGMYPAGEYDLAGFAVGVVEKSKVISGRDIVPGDVVLGLASNGVHSNGYSLVRKIIDRAQPELDAPFDGDKTLRDAVIAPTRIYVKPLLKLMETLPVKGMAHITGGGITENTPRVLPDNTVAQIDAASWQLPKLFQWLQREGNVDIQEMYRTFNCGIGMVVVVAPEHAEQALALLREAGETVYRIGQVRERQGGEHQTQIA</sequence>
<comment type="catalytic activity">
    <reaction evidence="1">
        <text>2-formamido-N(1)-(5-O-phospho-beta-D-ribosyl)acetamidine + ATP = 5-amino-1-(5-phospho-beta-D-ribosyl)imidazole + ADP + phosphate + H(+)</text>
        <dbReference type="Rhea" id="RHEA:23032"/>
        <dbReference type="ChEBI" id="CHEBI:15378"/>
        <dbReference type="ChEBI" id="CHEBI:30616"/>
        <dbReference type="ChEBI" id="CHEBI:43474"/>
        <dbReference type="ChEBI" id="CHEBI:137981"/>
        <dbReference type="ChEBI" id="CHEBI:147287"/>
        <dbReference type="ChEBI" id="CHEBI:456216"/>
        <dbReference type="EC" id="6.3.3.1"/>
    </reaction>
</comment>
<comment type="pathway">
    <text evidence="1">Purine metabolism; IMP biosynthesis via de novo pathway; 5-amino-1-(5-phospho-D-ribosyl)imidazole from N(2)-formyl-N(1)-(5-phospho-D-ribosyl)glycinamide: step 2/2.</text>
</comment>
<comment type="subcellular location">
    <subcellularLocation>
        <location evidence="1">Cytoplasm</location>
    </subcellularLocation>
</comment>
<comment type="similarity">
    <text evidence="1">Belongs to the AIR synthase family.</text>
</comment>
<reference key="1">
    <citation type="journal article" date="2003" name="Proc. Natl. Acad. Sci. U.S.A.">
        <title>The complete genome sequence of Chromobacterium violaceum reveals remarkable and exploitable bacterial adaptability.</title>
        <authorList>
            <person name="Vasconcelos A.T.R."/>
            <person name="de Almeida D.F."/>
            <person name="Hungria M."/>
            <person name="Guimaraes C.T."/>
            <person name="Antonio R.V."/>
            <person name="Almeida F.C."/>
            <person name="de Almeida L.G.P."/>
            <person name="de Almeida R."/>
            <person name="Alves-Gomes J.A."/>
            <person name="Andrade E.M."/>
            <person name="Araripe J."/>
            <person name="de Araujo M.F.F."/>
            <person name="Astolfi-Filho S."/>
            <person name="Azevedo V."/>
            <person name="Baptista A.J."/>
            <person name="Bataus L.A.M."/>
            <person name="Batista J.S."/>
            <person name="Belo A."/>
            <person name="van den Berg C."/>
            <person name="Bogo M."/>
            <person name="Bonatto S."/>
            <person name="Bordignon J."/>
            <person name="Brigido M.M."/>
            <person name="Brito C.A."/>
            <person name="Brocchi M."/>
            <person name="Burity H.A."/>
            <person name="Camargo A.A."/>
            <person name="Cardoso D.D.P."/>
            <person name="Carneiro N.P."/>
            <person name="Carraro D.M."/>
            <person name="Carvalho C.M.B."/>
            <person name="Cascardo J.C.M."/>
            <person name="Cavada B.S."/>
            <person name="Chueire L.M.O."/>
            <person name="Creczynski-Pasa T.B."/>
            <person name="Cunha-Junior N.C."/>
            <person name="Fagundes N."/>
            <person name="Falcao C.L."/>
            <person name="Fantinatti F."/>
            <person name="Farias I.P."/>
            <person name="Felipe M.S.S."/>
            <person name="Ferrari L.P."/>
            <person name="Ferro J.A."/>
            <person name="Ferro M.I.T."/>
            <person name="Franco G.R."/>
            <person name="Freitas N.S.A."/>
            <person name="Furlan L.R."/>
            <person name="Gazzinelli R.T."/>
            <person name="Gomes E.A."/>
            <person name="Goncalves P.R."/>
            <person name="Grangeiro T.B."/>
            <person name="Grattapaglia D."/>
            <person name="Grisard E.C."/>
            <person name="Hanna E.S."/>
            <person name="Jardim S.N."/>
            <person name="Laurino J."/>
            <person name="Leoi L.C.T."/>
            <person name="Lima L.F.A."/>
            <person name="Loureiro M.F."/>
            <person name="Lyra M.C.C.P."/>
            <person name="Madeira H.M.F."/>
            <person name="Manfio G.P."/>
            <person name="Maranhao A.Q."/>
            <person name="Martins W.S."/>
            <person name="di Mauro S.M.Z."/>
            <person name="de Medeiros S.R.B."/>
            <person name="Meissner R.V."/>
            <person name="Moreira M.A.M."/>
            <person name="Nascimento F.F."/>
            <person name="Nicolas M.F."/>
            <person name="Oliveira J.G."/>
            <person name="Oliveira S.C."/>
            <person name="Paixao R.F.C."/>
            <person name="Parente J.A."/>
            <person name="Pedrosa F.O."/>
            <person name="Pena S.D.J."/>
            <person name="Pereira J.O."/>
            <person name="Pereira M."/>
            <person name="Pinto L.S.R.C."/>
            <person name="Pinto L.S."/>
            <person name="Porto J.I.R."/>
            <person name="Potrich D.P."/>
            <person name="Ramalho-Neto C.E."/>
            <person name="Reis A.M.M."/>
            <person name="Rigo L.U."/>
            <person name="Rondinelli E."/>
            <person name="Santos E.B.P."/>
            <person name="Santos F.R."/>
            <person name="Schneider M.P.C."/>
            <person name="Seuanez H.N."/>
            <person name="Silva A.M.R."/>
            <person name="da Silva A.L.C."/>
            <person name="Silva D.W."/>
            <person name="Silva R."/>
            <person name="Simoes I.C."/>
            <person name="Simon D."/>
            <person name="Soares C.M.A."/>
            <person name="Soares R.B.A."/>
            <person name="Souza E.M."/>
            <person name="Souza K.R.L."/>
            <person name="Souza R.C."/>
            <person name="Steffens M.B.R."/>
            <person name="Steindel M."/>
            <person name="Teixeira S.R."/>
            <person name="Urmenyi T."/>
            <person name="Vettore A."/>
            <person name="Wassem R."/>
            <person name="Zaha A."/>
            <person name="Simpson A.J.G."/>
        </authorList>
    </citation>
    <scope>NUCLEOTIDE SEQUENCE [LARGE SCALE GENOMIC DNA]</scope>
    <source>
        <strain>ATCC 12472 / DSM 30191 / JCM 1249 / CCUG 213 / NBRC 12614 / NCIMB 9131 / NCTC 9757 / MK</strain>
    </source>
</reference>
<evidence type="ECO:0000255" key="1">
    <source>
        <dbReference type="HAMAP-Rule" id="MF_00741"/>
    </source>
</evidence>
<feature type="chain" id="PRO_0000148204" description="Phosphoribosylformylglycinamidine cyclo-ligase">
    <location>
        <begin position="1"/>
        <end position="345"/>
    </location>
</feature>
<keyword id="KW-0067">ATP-binding</keyword>
<keyword id="KW-0963">Cytoplasm</keyword>
<keyword id="KW-0436">Ligase</keyword>
<keyword id="KW-0547">Nucleotide-binding</keyword>
<keyword id="KW-0658">Purine biosynthesis</keyword>
<keyword id="KW-1185">Reference proteome</keyword>
<gene>
    <name evidence="1" type="primary">purM</name>
    <name type="ordered locus">CV_3615</name>
</gene>
<dbReference type="EC" id="6.3.3.1" evidence="1"/>
<dbReference type="EMBL" id="AE016825">
    <property type="protein sequence ID" value="AAQ61277.1"/>
    <property type="molecule type" value="Genomic_DNA"/>
</dbReference>
<dbReference type="RefSeq" id="WP_011137162.1">
    <property type="nucleotide sequence ID" value="NC_005085.1"/>
</dbReference>
<dbReference type="SMR" id="Q7NS12"/>
<dbReference type="STRING" id="243365.CV_3615"/>
<dbReference type="KEGG" id="cvi:CV_3615"/>
<dbReference type="eggNOG" id="COG0150">
    <property type="taxonomic scope" value="Bacteria"/>
</dbReference>
<dbReference type="HOGENOM" id="CLU_047116_0_0_4"/>
<dbReference type="OrthoDB" id="9777881at2"/>
<dbReference type="UniPathway" id="UPA00074">
    <property type="reaction ID" value="UER00129"/>
</dbReference>
<dbReference type="Proteomes" id="UP000001424">
    <property type="component" value="Chromosome"/>
</dbReference>
<dbReference type="GO" id="GO:0005829">
    <property type="term" value="C:cytosol"/>
    <property type="evidence" value="ECO:0007669"/>
    <property type="project" value="TreeGrafter"/>
</dbReference>
<dbReference type="GO" id="GO:0005524">
    <property type="term" value="F:ATP binding"/>
    <property type="evidence" value="ECO:0007669"/>
    <property type="project" value="UniProtKB-KW"/>
</dbReference>
<dbReference type="GO" id="GO:0004637">
    <property type="term" value="F:phosphoribosylamine-glycine ligase activity"/>
    <property type="evidence" value="ECO:0007669"/>
    <property type="project" value="TreeGrafter"/>
</dbReference>
<dbReference type="GO" id="GO:0004641">
    <property type="term" value="F:phosphoribosylformylglycinamidine cyclo-ligase activity"/>
    <property type="evidence" value="ECO:0007669"/>
    <property type="project" value="UniProtKB-UniRule"/>
</dbReference>
<dbReference type="GO" id="GO:0006189">
    <property type="term" value="P:'de novo' IMP biosynthetic process"/>
    <property type="evidence" value="ECO:0007669"/>
    <property type="project" value="UniProtKB-UniRule"/>
</dbReference>
<dbReference type="GO" id="GO:0046084">
    <property type="term" value="P:adenine biosynthetic process"/>
    <property type="evidence" value="ECO:0007669"/>
    <property type="project" value="TreeGrafter"/>
</dbReference>
<dbReference type="CDD" id="cd02196">
    <property type="entry name" value="PurM"/>
    <property type="match status" value="1"/>
</dbReference>
<dbReference type="FunFam" id="3.30.1330.10:FF:000001">
    <property type="entry name" value="Phosphoribosylformylglycinamidine cyclo-ligase"/>
    <property type="match status" value="1"/>
</dbReference>
<dbReference type="FunFam" id="3.90.650.10:FF:000001">
    <property type="entry name" value="Phosphoribosylformylglycinamidine cyclo-ligase"/>
    <property type="match status" value="1"/>
</dbReference>
<dbReference type="Gene3D" id="3.90.650.10">
    <property type="entry name" value="PurM-like C-terminal domain"/>
    <property type="match status" value="1"/>
</dbReference>
<dbReference type="Gene3D" id="3.30.1330.10">
    <property type="entry name" value="PurM-like, N-terminal domain"/>
    <property type="match status" value="1"/>
</dbReference>
<dbReference type="HAMAP" id="MF_00741">
    <property type="entry name" value="AIRS"/>
    <property type="match status" value="1"/>
</dbReference>
<dbReference type="InterPro" id="IPR010918">
    <property type="entry name" value="PurM-like_C_dom"/>
</dbReference>
<dbReference type="InterPro" id="IPR036676">
    <property type="entry name" value="PurM-like_C_sf"/>
</dbReference>
<dbReference type="InterPro" id="IPR016188">
    <property type="entry name" value="PurM-like_N"/>
</dbReference>
<dbReference type="InterPro" id="IPR036921">
    <property type="entry name" value="PurM-like_N_sf"/>
</dbReference>
<dbReference type="InterPro" id="IPR004733">
    <property type="entry name" value="PurM_cligase"/>
</dbReference>
<dbReference type="NCBIfam" id="TIGR00878">
    <property type="entry name" value="purM"/>
    <property type="match status" value="1"/>
</dbReference>
<dbReference type="PANTHER" id="PTHR10520:SF12">
    <property type="entry name" value="TRIFUNCTIONAL PURINE BIOSYNTHETIC PROTEIN ADENOSINE-3"/>
    <property type="match status" value="1"/>
</dbReference>
<dbReference type="PANTHER" id="PTHR10520">
    <property type="entry name" value="TRIFUNCTIONAL PURINE BIOSYNTHETIC PROTEIN ADENOSINE-3-RELATED"/>
    <property type="match status" value="1"/>
</dbReference>
<dbReference type="Pfam" id="PF00586">
    <property type="entry name" value="AIRS"/>
    <property type="match status" value="1"/>
</dbReference>
<dbReference type="Pfam" id="PF02769">
    <property type="entry name" value="AIRS_C"/>
    <property type="match status" value="1"/>
</dbReference>
<dbReference type="SUPFAM" id="SSF56042">
    <property type="entry name" value="PurM C-terminal domain-like"/>
    <property type="match status" value="1"/>
</dbReference>
<dbReference type="SUPFAM" id="SSF55326">
    <property type="entry name" value="PurM N-terminal domain-like"/>
    <property type="match status" value="1"/>
</dbReference>